<name>SYGB_YERPS</name>
<gene>
    <name evidence="1" type="primary">glyS</name>
    <name type="ordered locus">YPTB3916</name>
</gene>
<feature type="chain" id="PRO_1000006426" description="Glycine--tRNA ligase beta subunit">
    <location>
        <begin position="1"/>
        <end position="689"/>
    </location>
</feature>
<evidence type="ECO:0000255" key="1">
    <source>
        <dbReference type="HAMAP-Rule" id="MF_00255"/>
    </source>
</evidence>
<proteinExistence type="inferred from homology"/>
<sequence length="689" mass="76204">MTQQTFLVEIGTEELPPKALRSLAESFAANFTAELDNANLSHGEVSWYAAPRRLAVKVANLSAAQADREVEKRGPAIAQAFDAEGKPSKAAEGWARGCGITVDQAERLVTDKGEWLLYRAHVKGQPAQLLLAGMVNTALSKLPIPKLMRWGDKETQFVRPVHTVTLLLGTEVIPGTVLGINSDRVIRGHRFMGEAEFTIDSADQYPQILLERGKVIADYELRKSIIKRDAEQAAQQIGGVADLSESLLEEVASLVEWPVVLTAKFEEKFLAVPAEALVYTMKGDQKYFPVYDTAGHLMPHFIFVANIESKDPQQIISGNEKVVRPRLADAEFFFKTDRKKRLEDNLPRLETVLFQQQLGTLRDKTDRIQALAGWVAAQIGADVNHATRAGLLSKCDLMTNMVFEFTDTQGVMGMHYARHDGEAEDVAVALNEQYQPRFAGDDLPSNPVACALAIADKMDTLAGIFGIGQHPKGDKDPFALRRAALGVLRIIVEKNLSLDLQTLTEEAVRLYGSKLTNAKVVDDVIEFMLGRFRAWYQDEGHSVDTIQAVLARRPTKPADFDARVKAVTYFRTLDAAAALAAANKRVSNILAKSTDTLNDHVHASILKEPAELKLATHLVVLRDQLEPVFAAGQYKEALVELAALRETVDEFFESVMVMAEDDAVRVNRLTLLSKLRELFLQVADISLLQ</sequence>
<organism>
    <name type="scientific">Yersinia pseudotuberculosis serotype I (strain IP32953)</name>
    <dbReference type="NCBI Taxonomy" id="273123"/>
    <lineage>
        <taxon>Bacteria</taxon>
        <taxon>Pseudomonadati</taxon>
        <taxon>Pseudomonadota</taxon>
        <taxon>Gammaproteobacteria</taxon>
        <taxon>Enterobacterales</taxon>
        <taxon>Yersiniaceae</taxon>
        <taxon>Yersinia</taxon>
    </lineage>
</organism>
<keyword id="KW-0030">Aminoacyl-tRNA synthetase</keyword>
<keyword id="KW-0067">ATP-binding</keyword>
<keyword id="KW-0963">Cytoplasm</keyword>
<keyword id="KW-0436">Ligase</keyword>
<keyword id="KW-0547">Nucleotide-binding</keyword>
<keyword id="KW-0648">Protein biosynthesis</keyword>
<dbReference type="EC" id="6.1.1.14" evidence="1"/>
<dbReference type="EMBL" id="BX936398">
    <property type="protein sequence ID" value="CAH23154.1"/>
    <property type="molecule type" value="Genomic_DNA"/>
</dbReference>
<dbReference type="RefSeq" id="WP_002209623.1">
    <property type="nucleotide sequence ID" value="NZ_CP009712.1"/>
</dbReference>
<dbReference type="SMR" id="Q663V8"/>
<dbReference type="GeneID" id="57974645"/>
<dbReference type="KEGG" id="ypo:BZ17_2665"/>
<dbReference type="KEGG" id="yps:YPTB3916"/>
<dbReference type="PATRIC" id="fig|273123.14.peg.2793"/>
<dbReference type="Proteomes" id="UP000001011">
    <property type="component" value="Chromosome"/>
</dbReference>
<dbReference type="GO" id="GO:0005829">
    <property type="term" value="C:cytosol"/>
    <property type="evidence" value="ECO:0007669"/>
    <property type="project" value="TreeGrafter"/>
</dbReference>
<dbReference type="GO" id="GO:0004814">
    <property type="term" value="F:arginine-tRNA ligase activity"/>
    <property type="evidence" value="ECO:0007669"/>
    <property type="project" value="InterPro"/>
</dbReference>
<dbReference type="GO" id="GO:0005524">
    <property type="term" value="F:ATP binding"/>
    <property type="evidence" value="ECO:0007669"/>
    <property type="project" value="UniProtKB-UniRule"/>
</dbReference>
<dbReference type="GO" id="GO:0004820">
    <property type="term" value="F:glycine-tRNA ligase activity"/>
    <property type="evidence" value="ECO:0007669"/>
    <property type="project" value="UniProtKB-UniRule"/>
</dbReference>
<dbReference type="GO" id="GO:0006420">
    <property type="term" value="P:arginyl-tRNA aminoacylation"/>
    <property type="evidence" value="ECO:0007669"/>
    <property type="project" value="InterPro"/>
</dbReference>
<dbReference type="GO" id="GO:0006426">
    <property type="term" value="P:glycyl-tRNA aminoacylation"/>
    <property type="evidence" value="ECO:0007669"/>
    <property type="project" value="UniProtKB-UniRule"/>
</dbReference>
<dbReference type="HAMAP" id="MF_00255">
    <property type="entry name" value="Gly_tRNA_synth_beta"/>
    <property type="match status" value="1"/>
</dbReference>
<dbReference type="InterPro" id="IPR008909">
    <property type="entry name" value="DALR_anticod-bd"/>
</dbReference>
<dbReference type="InterPro" id="IPR015944">
    <property type="entry name" value="Gly-tRNA-synth_bsu"/>
</dbReference>
<dbReference type="InterPro" id="IPR006194">
    <property type="entry name" value="Gly-tRNA-synth_heterodimer"/>
</dbReference>
<dbReference type="NCBIfam" id="TIGR00211">
    <property type="entry name" value="glyS"/>
    <property type="match status" value="1"/>
</dbReference>
<dbReference type="PANTHER" id="PTHR30075:SF2">
    <property type="entry name" value="GLYCINE--TRNA LIGASE, CHLOROPLASTIC_MITOCHONDRIAL 2"/>
    <property type="match status" value="1"/>
</dbReference>
<dbReference type="PANTHER" id="PTHR30075">
    <property type="entry name" value="GLYCYL-TRNA SYNTHETASE"/>
    <property type="match status" value="1"/>
</dbReference>
<dbReference type="Pfam" id="PF05746">
    <property type="entry name" value="DALR_1"/>
    <property type="match status" value="1"/>
</dbReference>
<dbReference type="Pfam" id="PF02092">
    <property type="entry name" value="tRNA_synt_2f"/>
    <property type="match status" value="1"/>
</dbReference>
<dbReference type="PRINTS" id="PR01045">
    <property type="entry name" value="TRNASYNTHGB"/>
</dbReference>
<dbReference type="SUPFAM" id="SSF109604">
    <property type="entry name" value="HD-domain/PDEase-like"/>
    <property type="match status" value="1"/>
</dbReference>
<dbReference type="PROSITE" id="PS50861">
    <property type="entry name" value="AA_TRNA_LIGASE_II_GLYAB"/>
    <property type="match status" value="1"/>
</dbReference>
<reference key="1">
    <citation type="journal article" date="2004" name="Proc. Natl. Acad. Sci. U.S.A.">
        <title>Insights into the evolution of Yersinia pestis through whole-genome comparison with Yersinia pseudotuberculosis.</title>
        <authorList>
            <person name="Chain P.S.G."/>
            <person name="Carniel E."/>
            <person name="Larimer F.W."/>
            <person name="Lamerdin J."/>
            <person name="Stoutland P.O."/>
            <person name="Regala W.M."/>
            <person name="Georgescu A.M."/>
            <person name="Vergez L.M."/>
            <person name="Land M.L."/>
            <person name="Motin V.L."/>
            <person name="Brubaker R.R."/>
            <person name="Fowler J."/>
            <person name="Hinnebusch J."/>
            <person name="Marceau M."/>
            <person name="Medigue C."/>
            <person name="Simonet M."/>
            <person name="Chenal-Francisque V."/>
            <person name="Souza B."/>
            <person name="Dacheux D."/>
            <person name="Elliott J.M."/>
            <person name="Derbise A."/>
            <person name="Hauser L.J."/>
            <person name="Garcia E."/>
        </authorList>
    </citation>
    <scope>NUCLEOTIDE SEQUENCE [LARGE SCALE GENOMIC DNA]</scope>
    <source>
        <strain>IP32953</strain>
    </source>
</reference>
<accession>Q663V8</accession>
<comment type="catalytic activity">
    <reaction evidence="1">
        <text>tRNA(Gly) + glycine + ATP = glycyl-tRNA(Gly) + AMP + diphosphate</text>
        <dbReference type="Rhea" id="RHEA:16013"/>
        <dbReference type="Rhea" id="RHEA-COMP:9664"/>
        <dbReference type="Rhea" id="RHEA-COMP:9683"/>
        <dbReference type="ChEBI" id="CHEBI:30616"/>
        <dbReference type="ChEBI" id="CHEBI:33019"/>
        <dbReference type="ChEBI" id="CHEBI:57305"/>
        <dbReference type="ChEBI" id="CHEBI:78442"/>
        <dbReference type="ChEBI" id="CHEBI:78522"/>
        <dbReference type="ChEBI" id="CHEBI:456215"/>
        <dbReference type="EC" id="6.1.1.14"/>
    </reaction>
</comment>
<comment type="subunit">
    <text evidence="1">Tetramer of two alpha and two beta subunits.</text>
</comment>
<comment type="subcellular location">
    <subcellularLocation>
        <location evidence="1">Cytoplasm</location>
    </subcellularLocation>
</comment>
<comment type="similarity">
    <text evidence="1">Belongs to the class-II aminoacyl-tRNA synthetase family.</text>
</comment>
<protein>
    <recommendedName>
        <fullName evidence="1">Glycine--tRNA ligase beta subunit</fullName>
        <ecNumber evidence="1">6.1.1.14</ecNumber>
    </recommendedName>
    <alternativeName>
        <fullName evidence="1">Glycyl-tRNA synthetase beta subunit</fullName>
        <shortName evidence="1">GlyRS</shortName>
    </alternativeName>
</protein>